<sequence>MDKVTDNSPDVESTESTEGSFPTVGVDTGDTITATLATGTENVGGGGGAFGGASESSAAIHATAKWSTAQLKKHQAEQAARAAAAEAALAKAKSQRDALTQRLKDIVNDALRANAARSPSVTDLAHANNMAMQAEAERLRLAKAEQKAREEAEAAEKALREAERQRDEIARQQAETAHLLAMAEAAEAEKNRQDSLDEEHRAVEVAEKKLAEAKAELAKAESDVQSKQAIVSRVAGELENAQKSVDVKVTGFPGWRDVQKKLERQLQDKKNEYSSVTNALNSAVSIRDAKKTEVQNAEIKLKEAKDALEKSQVKDSVDTMVGFYQYITEQYGEKYSRIAQDLAEKAKGSKFNSVDEALAAFEKYKNVLDKKFSKVDRDDIFNALESITYDEWAKHLEKISRALKVTGYLSFGYDVWDGTLKGLKTGDWKPLFVTLEKSAVDFGVAKIVALMFSFIVGAPLGFWGIAIITGIVSSYIGDDELNKLNELLGI</sequence>
<reference key="1">
    <citation type="journal article" date="1995" name="Mol. Microbiol.">
        <title>Novel colicin 10: assignment of four domains to TonB- and TolC-dependent uptake via the Tsx receptor and to pore formation.</title>
        <authorList>
            <person name="Pilsl H."/>
            <person name="Braun V."/>
        </authorList>
    </citation>
    <scope>NUCLEOTIDE SEQUENCE [GENOMIC DNA]</scope>
    <source>
        <strain>PTE10</strain>
    </source>
</reference>
<keyword id="KW-0044">Antibiotic</keyword>
<keyword id="KW-0929">Antimicrobial</keyword>
<keyword id="KW-0078">Bacteriocin</keyword>
<keyword id="KW-1043">Host membrane</keyword>
<keyword id="KW-0472">Membrane</keyword>
<keyword id="KW-0614">Plasmid</keyword>
<keyword id="KW-0812">Transmembrane</keyword>
<keyword id="KW-1133">Transmembrane helix</keyword>
<feature type="chain" id="PRO_0000218673" description="Colicin-10">
    <location>
        <begin position="1"/>
        <end position="490"/>
    </location>
</feature>
<feature type="transmembrane region" description="Helical" evidence="1">
    <location>
        <begin position="447"/>
        <end position="467"/>
    </location>
</feature>
<feature type="region of interest" description="Disordered" evidence="2">
    <location>
        <begin position="1"/>
        <end position="29"/>
    </location>
</feature>
<feature type="region of interest" description="Disordered" evidence="2">
    <location>
        <begin position="146"/>
        <end position="171"/>
    </location>
</feature>
<feature type="compositionally biased region" description="Polar residues" evidence="2">
    <location>
        <begin position="1"/>
        <end position="20"/>
    </location>
</feature>
<feature type="compositionally biased region" description="Basic and acidic residues" evidence="2">
    <location>
        <begin position="146"/>
        <end position="170"/>
    </location>
</feature>
<dbReference type="EMBL" id="X82682">
    <property type="protein sequence ID" value="CAA57998.1"/>
    <property type="molecule type" value="Genomic_DNA"/>
</dbReference>
<dbReference type="PIR" id="I41024">
    <property type="entry name" value="I41024"/>
</dbReference>
<dbReference type="SMR" id="Q47125"/>
<dbReference type="TCDB" id="1.C.1.2.3">
    <property type="family name" value="the channel-forming colicin (colicin) family"/>
</dbReference>
<dbReference type="GO" id="GO:0033644">
    <property type="term" value="C:host cell membrane"/>
    <property type="evidence" value="ECO:0007669"/>
    <property type="project" value="UniProtKB-SubCell"/>
</dbReference>
<dbReference type="GO" id="GO:0016020">
    <property type="term" value="C:membrane"/>
    <property type="evidence" value="ECO:0007669"/>
    <property type="project" value="UniProtKB-KW"/>
</dbReference>
<dbReference type="GO" id="GO:0140911">
    <property type="term" value="F:pore-forming activity"/>
    <property type="evidence" value="ECO:0007669"/>
    <property type="project" value="InterPro"/>
</dbReference>
<dbReference type="GO" id="GO:0050829">
    <property type="term" value="P:defense response to Gram-negative bacterium"/>
    <property type="evidence" value="ECO:0007669"/>
    <property type="project" value="InterPro"/>
</dbReference>
<dbReference type="GO" id="GO:0031640">
    <property type="term" value="P:killing of cells of another organism"/>
    <property type="evidence" value="ECO:0007669"/>
    <property type="project" value="UniProtKB-KW"/>
</dbReference>
<dbReference type="Gene3D" id="1.10.490.30">
    <property type="entry name" value="Colicin"/>
    <property type="match status" value="1"/>
</dbReference>
<dbReference type="Gene3D" id="1.10.287.620">
    <property type="entry name" value="Helix Hairpins"/>
    <property type="match status" value="1"/>
</dbReference>
<dbReference type="InterPro" id="IPR000293">
    <property type="entry name" value="Channel_colicin_C"/>
</dbReference>
<dbReference type="InterPro" id="IPR038283">
    <property type="entry name" value="Channel_colicin_C_sf"/>
</dbReference>
<dbReference type="Pfam" id="PF01024">
    <property type="entry name" value="Colicin"/>
    <property type="match status" value="1"/>
</dbReference>
<dbReference type="PRINTS" id="PR00280">
    <property type="entry name" value="CHANLCOLICIN"/>
</dbReference>
<dbReference type="SUPFAM" id="SSF56837">
    <property type="entry name" value="Colicin"/>
    <property type="match status" value="1"/>
</dbReference>
<dbReference type="PROSITE" id="PS00276">
    <property type="entry name" value="CHANNEL_COLICIN"/>
    <property type="match status" value="1"/>
</dbReference>
<name>CE10_ECOLX</name>
<evidence type="ECO:0000255" key="1"/>
<evidence type="ECO:0000256" key="2">
    <source>
        <dbReference type="SAM" id="MobiDB-lite"/>
    </source>
</evidence>
<evidence type="ECO:0000305" key="3"/>
<protein>
    <recommendedName>
        <fullName>Colicin-10</fullName>
    </recommendedName>
</protein>
<geneLocation type="plasmid">
    <name>pCol10</name>
</geneLocation>
<comment type="function">
    <text>This colicin is a channel-forming colicin. This class of transmembrane toxins depolarize the cytoplasmic membrane, leading to dissipation of cellular energy.</text>
</comment>
<comment type="function">
    <text>Colicins are polypeptide toxins produced by and active against E.coli and closely related bacteria.</text>
</comment>
<comment type="subcellular location">
    <subcellularLocation>
        <location evidence="3">Host membrane</location>
    </subcellularLocation>
</comment>
<comment type="similarity">
    <text evidence="3">Belongs to the channel forming colicin family.</text>
</comment>
<organism>
    <name type="scientific">Escherichia coli</name>
    <dbReference type="NCBI Taxonomy" id="562"/>
    <lineage>
        <taxon>Bacteria</taxon>
        <taxon>Pseudomonadati</taxon>
        <taxon>Pseudomonadota</taxon>
        <taxon>Gammaproteobacteria</taxon>
        <taxon>Enterobacterales</taxon>
        <taxon>Enterobacteriaceae</taxon>
        <taxon>Escherichia</taxon>
    </lineage>
</organism>
<accession>Q47125</accession>
<gene>
    <name type="primary">cta</name>
</gene>
<proteinExistence type="inferred from homology"/>